<comment type="function">
    <molecule>Capsid protein C</molecule>
    <text evidence="5">Plays a role in virus budding by binding to membrane and gathering the viral RNA into a nucleocapsid that forms the core of a mature virus particle. During virus entry, may induce genome penetration in host cytoplasm after hemifusion induced by surface proteins. Can migrate to the cell nucleus where it modulates host functions.</text>
</comment>
<comment type="function">
    <molecule>Capsid protein C</molecule>
    <text evidence="1">Inhibits RNA silencing by interfering with host Dicer.</text>
</comment>
<comment type="function">
    <molecule>Peptide pr</molecule>
    <text evidence="5">Prevents premature fusion activity of envelope proteins in trans-Golgi by binding to envelope protein E at pH6.0. After virion release in extracellular space gets dissociated from E dimers.</text>
</comment>
<comment type="function">
    <molecule>Protein prM</molecule>
    <text evidence="5">Acts as a chaperone for envelope protein E during intracellular virion assembly by masking and inactivating envelope protein E fusion peptide. prM is the only viral peptide matured by host furin in the trans-Golgi network. Presumably to avoid catastrophic activation of the viral fusion activity in acidic GolGi compartment prior to virion release. prM-E cleavage is ineficient, and many virions are only partially matured. These uncleaved prM would play a role in immune evasion.</text>
</comment>
<comment type="function">
    <molecule>Small envelope protein M</molecule>
    <text evidence="5">May play a role in virus budding. Exerts cytotoxic effects by activating a mitochondrial apoptotic pathway through M extodomain. May display a viroporin activity.</text>
</comment>
<comment type="function">
    <molecule>Envelope protein E</molecule>
    <text evidence="5">Binds to host cell surface receptor and mediates fusion between viral and cellular membranes. Envelope protein is synthesized in the endoplasmic reticulum in the form of heterodimer with protein prM. They play a role in virion budding in the ER, and the newly formed immature particle is covered with 60 spikes composed of heterodimer between precursor prM and envelope protein E. The virion is transported to the Golgi apparatus where the low pH causes dissociation of PrM-E heterodimers and formation of E homodimers. prM-E cleavage is ineficient, and many virions are only partially matured. These uncleaved prM would play a role in immune evasion.</text>
</comment>
<comment type="function">
    <molecule>Non-structural protein 1</molecule>
    <text evidence="9">Involved in immune evasion, pathogenesis and viral replication. Once cleaved off the polyprotein, is targeted to three destinations: the viral replication cycle, the plasma membrane and the extracellular compartment. Essential for viral replication. Required for formation of the replication complex and recruitment of other non-structural proteins to the ER-derived membrane structures. Excreted as a hexameric lipoparticle that plays a role against host immune response. Antagonizing the complement function. Binds to the host macrophages and dendritic cells. Inhibits signal transduction originating from Toll-like receptor 3 (TLR3).</text>
</comment>
<comment type="function">
    <molecule>Non-structural protein 2A</molecule>
    <text evidence="5">Component of the viral RNA replication complex that functions in virion assembly and antagonizes the host immune response.</text>
</comment>
<comment type="function">
    <molecule>Serine protease subunit NS2B</molecule>
    <text evidence="5 15">Required cofactor for the serine protease function of NS3 (By similarity). May have membrane-destabilizing activity and form viroporins (By similarity).</text>
</comment>
<comment type="function">
    <molecule>Serine protease NS3</molecule>
    <text evidence="16">Displays three enzymatic activities: serine protease, NTPase and RNA helicase. NS3 serine protease, in association with NS2B, performs its autocleavage and cleaves the polyprotein at dibasic sites in the cytoplasm: C-prM, NS2A-NS2B, NS2B-NS3, NS3-NS4A, NS4A-2K and NS4B-NS5. NS3 RNA helicase binds RNA and unwinds dsRNA in the 3' to 5' direction.</text>
</comment>
<comment type="function">
    <molecule>Non-structural protein 4A</molecule>
    <text evidence="9">Regulates the ATPase activity of the NS3 helicase activity. NS4A allows NS3 helicase to conserve energy during unwinding.</text>
</comment>
<comment type="function">
    <molecule>Peptide 2k</molecule>
    <text evidence="5">Functions as a signal peptide for NS4B and is required for the interferon antagonism activity of the latter.</text>
</comment>
<comment type="function">
    <molecule>Non-structural protein 4B</molecule>
    <text evidence="9">Induces the formation of ER-derived membrane vesicles where the viral replication takes place. Inhibits interferon (IFN)-induced host STAT1 phosphorylation and nuclear translocation, thereby preventing the establishment of cellular antiviral state by blocking the IFN-alpha/beta pathway. Inhibits STAT2 translocation in the nucleus after IFN-alpha treatment.</text>
</comment>
<comment type="function">
    <molecule>RNA-directed RNA polymerase NS5</molecule>
    <text evidence="5 19">Replicates the viral (+) and (-) genome, and performs the capping of genomes in the cytoplasm (By similarity). NS5 methylates viral RNA cap at guanine N-7 and ribose 2'-O positions (By similarity). Besides its role in genome replication, also prevents the establishment of cellular antiviral state by blocking the interferon-alpha/beta (IFN-alpha/beta) signaling pathway (PubMed:16188985). Inhibits host TYK2 and STAT2 phosphorylation, thereby preventing activation of JAK-STAT signaling pathway (PubMed:16188985).</text>
</comment>
<comment type="catalytic activity">
    <reaction>
        <text>Selective hydrolysis of -Xaa-Xaa-|-Yaa- bonds in which each of the Xaa can be either Arg or Lys and Yaa can be either Ser or Ala.</text>
        <dbReference type="EC" id="3.4.21.91"/>
    </reaction>
</comment>
<comment type="catalytic activity">
    <reaction evidence="12">
        <text>RNA(n) + a ribonucleoside 5'-triphosphate = RNA(n+1) + diphosphate</text>
        <dbReference type="Rhea" id="RHEA:21248"/>
        <dbReference type="Rhea" id="RHEA-COMP:14527"/>
        <dbReference type="Rhea" id="RHEA-COMP:17342"/>
        <dbReference type="ChEBI" id="CHEBI:33019"/>
        <dbReference type="ChEBI" id="CHEBI:61557"/>
        <dbReference type="ChEBI" id="CHEBI:140395"/>
        <dbReference type="EC" id="2.7.7.48"/>
    </reaction>
</comment>
<comment type="catalytic activity">
    <reaction>
        <text>a ribonucleoside 5'-triphosphate + H2O = a ribonucleoside 5'-diphosphate + phosphate + H(+)</text>
        <dbReference type="Rhea" id="RHEA:23680"/>
        <dbReference type="ChEBI" id="CHEBI:15377"/>
        <dbReference type="ChEBI" id="CHEBI:15378"/>
        <dbReference type="ChEBI" id="CHEBI:43474"/>
        <dbReference type="ChEBI" id="CHEBI:57930"/>
        <dbReference type="ChEBI" id="CHEBI:61557"/>
        <dbReference type="EC" id="3.6.1.15"/>
    </reaction>
</comment>
<comment type="catalytic activity">
    <reaction>
        <text>ATP + H2O = ADP + phosphate + H(+)</text>
        <dbReference type="Rhea" id="RHEA:13065"/>
        <dbReference type="ChEBI" id="CHEBI:15377"/>
        <dbReference type="ChEBI" id="CHEBI:15378"/>
        <dbReference type="ChEBI" id="CHEBI:30616"/>
        <dbReference type="ChEBI" id="CHEBI:43474"/>
        <dbReference type="ChEBI" id="CHEBI:456216"/>
        <dbReference type="EC" id="3.6.4.13"/>
    </reaction>
</comment>
<comment type="catalytic activity">
    <reaction evidence="17">
        <text>a 5'-end (5'-triphosphoguanosine)-ribonucleoside in mRNA + S-adenosyl-L-methionine = a 5'-end (N(7)-methyl 5'-triphosphoguanosine)-ribonucleoside in mRNA + S-adenosyl-L-homocysteine</text>
        <dbReference type="Rhea" id="RHEA:67008"/>
        <dbReference type="Rhea" id="RHEA-COMP:17166"/>
        <dbReference type="Rhea" id="RHEA-COMP:17167"/>
        <dbReference type="ChEBI" id="CHEBI:57856"/>
        <dbReference type="ChEBI" id="CHEBI:59789"/>
        <dbReference type="ChEBI" id="CHEBI:156461"/>
        <dbReference type="ChEBI" id="CHEBI:167617"/>
        <dbReference type="EC" id="2.1.1.56"/>
    </reaction>
</comment>
<comment type="catalytic activity">
    <reaction evidence="17">
        <text>a 5'-end (N(7)-methyl 5'-triphosphoguanosine)-ribonucleoside in mRNA + S-adenosyl-L-methionine = a 5'-end (N(7)-methyl 5'-triphosphoguanosine)-(2'-O-methyl-ribonucleoside) in mRNA + S-adenosyl-L-homocysteine + H(+)</text>
        <dbReference type="Rhea" id="RHEA:67020"/>
        <dbReference type="Rhea" id="RHEA-COMP:17167"/>
        <dbReference type="Rhea" id="RHEA-COMP:17168"/>
        <dbReference type="ChEBI" id="CHEBI:15378"/>
        <dbReference type="ChEBI" id="CHEBI:57856"/>
        <dbReference type="ChEBI" id="CHEBI:59789"/>
        <dbReference type="ChEBI" id="CHEBI:156461"/>
        <dbReference type="ChEBI" id="CHEBI:167609"/>
        <dbReference type="EC" id="2.1.1.57"/>
    </reaction>
</comment>
<comment type="subunit">
    <molecule>Capsid protein C</molecule>
    <text evidence="5">Homodimer (By similarity). Interacts (via N-terminus) with host EXOC1 (via C-terminus); this interaction results in EXOC1 degradation through the proteasome degradation pathway (By similarity).</text>
</comment>
<comment type="subunit">
    <molecule>Protein prM</molecule>
    <text evidence="5">Forms heterodimers with envelope protein E in the endoplasmic reticulum and Golgi.</text>
</comment>
<comment type="subunit">
    <molecule>Envelope protein E</molecule>
    <text evidence="5">Homodimer; in the endoplasmic reticulum and Golgi (By similarity). Interacts with protein prM (By similarity). Interacts with non-structural protein 1 (By similarity).</text>
</comment>
<comment type="subunit">
    <molecule>Non-structural protein 1</molecule>
    <text evidence="5">Homodimer; Homohexamer when secreted. Interacts with envelope protein E.</text>
</comment>
<comment type="subunit">
    <molecule>Non-structural protein 2A</molecule>
    <text evidence="1">Interacts (via N-terminus) with serine protease NS3.</text>
</comment>
<comment type="subunit">
    <molecule>Serine protease subunit NS2B</molecule>
    <text evidence="5">Forms a heterodimer with serine protease NS3 (By similarity). May form homooligomers (By similarity).</text>
</comment>
<comment type="subunit">
    <molecule>Serine protease NS3</molecule>
    <text evidence="5">Forms a heterodimer with NS2B (By similarity). Interacts with non-structural protein 2A (via N-terminus) (By similarity). Interacts with NS4B (By similarity). Interacts with unphosphorylated RNA-directed RNA polymerase NS5; this interaction stimulates RNA-directed RNA polymerase NS5 guanylyltransferase activity (By similarity).</text>
</comment>
<comment type="subunit">
    <molecule>Non-structural protein 4B</molecule>
    <text evidence="5">Interacts with serine protease NS3 (By similarity). Interacts with NS1 (By similarity).</text>
</comment>
<comment type="subunit">
    <molecule>RNA-directed RNA polymerase NS5</molecule>
    <text evidence="6">Homodimer. Interacts with host STAT2; this interaction inhibits the phosphorylation of the latter, and, when all viral proteins are present (polyprotein), targets STAT2 for degradation. Interacts with serine protease NS3. Interacts with host SCRIB; this interaction targets NS5 to the cell membrane periphery and nucleus, thereby allowing efficient host nuclear STAT1 inhibition.</text>
</comment>
<comment type="subcellular location">
    <molecule>Capsid protein C</molecule>
    <subcellularLocation>
        <location evidence="5">Virion</location>
    </subcellularLocation>
    <subcellularLocation>
        <location evidence="5">Host nucleus</location>
    </subcellularLocation>
    <subcellularLocation>
        <location evidence="5">Host cytoplasm</location>
        <location evidence="5">Host perinuclear region</location>
    </subcellularLocation>
    <subcellularLocation>
        <location evidence="5">Host cytoplasm</location>
    </subcellularLocation>
</comment>
<comment type="subcellular location">
    <molecule>Peptide pr</molecule>
    <subcellularLocation>
        <location evidence="5">Secreted</location>
    </subcellularLocation>
</comment>
<comment type="subcellular location">
    <molecule>Small envelope protein M</molecule>
    <subcellularLocation>
        <location evidence="1">Virion membrane</location>
        <topology evidence="1">Multi-pass membrane protein</topology>
    </subcellularLocation>
    <subcellularLocation>
        <location evidence="1">Host endoplasmic reticulum membrane</location>
        <topology evidence="10">Multi-pass membrane protein</topology>
    </subcellularLocation>
    <text evidence="1">ER membrane retention is mediated by the transmembrane domains.</text>
</comment>
<comment type="subcellular location">
    <molecule>Envelope protein E</molecule>
    <subcellularLocation>
        <location evidence="21">Virion membrane</location>
        <topology evidence="1">Multi-pass membrane protein</topology>
    </subcellularLocation>
    <subcellularLocation>
        <location evidence="1">Host endoplasmic reticulum membrane</location>
        <topology evidence="10">Multi-pass membrane protein</topology>
    </subcellularLocation>
    <text evidence="1">ER membrane retention is mediated by the transmembrane domains.</text>
</comment>
<comment type="subcellular location">
    <molecule>Non-structural protein 1</molecule>
    <subcellularLocation>
        <location evidence="5">Secreted</location>
    </subcellularLocation>
    <subcellularLocation>
        <location>Host endoplasmic reticulum membrane</location>
        <topology>Peripheral membrane protein</topology>
        <orientation evidence="5">Lumenal side</orientation>
    </subcellularLocation>
    <text evidence="9">Located in RE-derived vesicles hosting the replication complex.</text>
</comment>
<comment type="subcellular location">
    <molecule>Non-structural protein 2A</molecule>
    <subcellularLocation>
        <location evidence="3">Host endoplasmic reticulum membrane</location>
        <topology evidence="5">Multi-pass membrane protein</topology>
    </subcellularLocation>
</comment>
<comment type="subcellular location">
    <molecule>Serine protease subunit NS2B</molecule>
    <subcellularLocation>
        <location>Host endoplasmic reticulum membrane</location>
        <topology evidence="5">Multi-pass membrane protein</topology>
    </subcellularLocation>
</comment>
<comment type="subcellular location">
    <molecule>Serine protease NS3</molecule>
    <subcellularLocation>
        <location evidence="16">Host endoplasmic reticulum membrane</location>
        <topology evidence="16">Peripheral membrane protein</topology>
        <orientation evidence="16">Cytoplasmic side</orientation>
    </subcellularLocation>
    <text evidence="16">Remains non-covalently associated to serine protease subunit NS2B.</text>
</comment>
<comment type="subcellular location">
    <molecule>Non-structural protein 4A</molecule>
    <subcellularLocation>
        <location evidence="3">Host endoplasmic reticulum membrane</location>
        <topology evidence="5">Multi-pass membrane protein</topology>
    </subcellularLocation>
    <text evidence="5">Located in RE-associated vesicles hosting the replication complex.</text>
</comment>
<comment type="subcellular location">
    <molecule>Non-structural protein 4B</molecule>
    <subcellularLocation>
        <location evidence="5">Host endoplasmic reticulum membrane</location>
        <topology evidence="5">Multi-pass membrane protein</topology>
    </subcellularLocation>
    <text evidence="9">Located in RE-derived vesicles hosting the replication complex.</text>
</comment>
<comment type="subcellular location">
    <molecule>RNA-directed RNA polymerase NS5</molecule>
    <subcellularLocation>
        <location>Host endoplasmic reticulum membrane</location>
        <topology>Peripheral membrane protein</topology>
        <orientation>Cytoplasmic side</orientation>
    </subcellularLocation>
    <subcellularLocation>
        <location evidence="2">Host nucleus</location>
    </subcellularLocation>
    <text evidence="5">Located in RE-associated vesicles hosting the replication complex. NS5 protein is mainly localized in the nucleus rather than in ER vesicles.</text>
</comment>
<comment type="domain">
    <text evidence="5">The transmembrane domains of the small envelope protein M and envelope protein E contain an endoplasmic reticulum retention signal.</text>
</comment>
<comment type="PTM">
    <molecule>Genome polyprotein</molecule>
    <text evidence="5">Specific enzymatic cleavages in vivo yield mature proteins. Cleavages in the lumen of endoplasmic reticulum are performed by host signal peptidase, whereas cleavages in the cytoplasmic side are performed by serine protease NS3. Signal cleavage at the 2K-4B site requires a prior NS3 protease-mediated cleavage at the 4A-2K site.</text>
</comment>
<comment type="PTM">
    <molecule>Protein prM</molecule>
    <text evidence="5">Cleaved in post-Golgi vesicles by a host furin, releasing the mature small envelope protein M, and peptide pr. This cleavage is incomplete as up to 30% of viral particles still carry uncleaved prM.</text>
</comment>
<comment type="PTM">
    <molecule>Envelope protein E</molecule>
    <text evidence="5">N-glycosylated.</text>
</comment>
<comment type="PTM">
    <molecule>Non-structural protein 1</molecule>
    <text evidence="5">N-glycosylated. The excreted form is glycosylated and this is required for efficient secretion of the protein from infected cells.</text>
</comment>
<comment type="PTM">
    <molecule>Serine protease NS3</molecule>
    <text evidence="7">Acetylated by host KAT5. Acetylation modulates NS3 RNA-binding and unwinding activities and plays an important positive role for viral replication.</text>
</comment>
<comment type="PTM">
    <molecule>RNA-directed RNA polymerase NS5</molecule>
    <text evidence="5">Phosphorylated on serines residues. This phosphorylation may trigger NS5 nuclear localization.</text>
</comment>
<comment type="similarity">
    <text evidence="17">In the N-terminal section; belongs to the class I-like SAM-binding methyltransferase superfamily. mRNA cap 0-1 NS5-type methyltransferase family.</text>
</comment>
<name>POLG_LANVT</name>
<organismHost>
    <name type="scientific">Homo sapiens</name>
    <name type="common">Human</name>
    <dbReference type="NCBI Taxonomy" id="9606"/>
</organismHost>
<organismHost>
    <name type="scientific">Ixodida</name>
    <name type="common">ticks</name>
    <dbReference type="NCBI Taxonomy" id="6935"/>
</organismHost>
<protein>
    <recommendedName>
        <fullName>Genome polyprotein</fullName>
    </recommendedName>
    <component>
        <recommendedName>
            <fullName>Peptide 2k</fullName>
        </recommendedName>
    </component>
    <component>
        <recommendedName>
            <fullName>Capsid protein C</fullName>
        </recommendedName>
        <alternativeName>
            <fullName>Core protein</fullName>
        </alternativeName>
    </component>
    <component>
        <recommendedName>
            <fullName>Protein prM</fullName>
        </recommendedName>
    </component>
    <component>
        <recommendedName>
            <fullName>Peptide pr</fullName>
        </recommendedName>
    </component>
    <component>
        <recommendedName>
            <fullName>Small envelope protein M</fullName>
        </recommendedName>
        <alternativeName>
            <fullName>Matrix protein</fullName>
        </alternativeName>
    </component>
    <component>
        <recommendedName>
            <fullName>Envelope protein E</fullName>
        </recommendedName>
    </component>
    <component>
        <recommendedName>
            <fullName>Non-structural protein 1</fullName>
            <shortName>NS1</shortName>
        </recommendedName>
    </component>
    <component>
        <recommendedName>
            <fullName>Non-structural protein 2A</fullName>
            <shortName>NS2A</shortName>
        </recommendedName>
    </component>
    <component>
        <recommendedName>
            <fullName>Serine protease subunit NS2B</fullName>
        </recommendedName>
        <alternativeName>
            <fullName>Flavivirin protease NS2B regulatory subunit</fullName>
        </alternativeName>
        <alternativeName>
            <fullName>Non-structural protein 2B</fullName>
        </alternativeName>
    </component>
    <component>
        <recommendedName>
            <fullName>Serine protease NS3</fullName>
            <ecNumber>3.4.21.91</ecNumber>
            <ecNumber>3.6.1.15</ecNumber>
            <ecNumber>3.6.4.13</ecNumber>
        </recommendedName>
        <alternativeName>
            <fullName>Flavivirin protease NS3 catalytic subunit</fullName>
        </alternativeName>
        <alternativeName>
            <fullName>Non-structural protein 3</fullName>
        </alternativeName>
    </component>
    <component>
        <recommendedName>
            <fullName>Non-structural protein 4A</fullName>
            <shortName>NS4A</shortName>
        </recommendedName>
    </component>
    <component>
        <recommendedName>
            <fullName>Non-structural protein 4B</fullName>
            <shortName>NS4B</shortName>
        </recommendedName>
    </component>
    <component>
        <recommendedName>
            <fullName>RNA-directed RNA polymerase NS5</fullName>
            <ecNumber evidence="17">2.1.1.56</ecNumber>
            <ecNumber evidence="17">2.1.1.57</ecNumber>
            <ecNumber evidence="12">2.7.7.48</ecNumber>
        </recommendedName>
        <alternativeName>
            <fullName>NS5</fullName>
        </alternativeName>
    </component>
</protein>
<reference key="1">
    <citation type="journal article" date="1991" name="Virology">
        <title>Sequence of the genes encoding the structural proteins of the low-virulence tick-borne flaviviruses Langat TP21 and Yelantsev.</title>
        <authorList>
            <person name="Mandl C.W."/>
            <person name="Iacono-Connors L.C."/>
            <person name="Wallner G."/>
            <person name="Holzmann H."/>
            <person name="Kunz C."/>
            <person name="Heinz F.X."/>
        </authorList>
    </citation>
    <scope>NUCLEOTIDE SEQUENCE [GENOMIC RNA] OF 1-776</scope>
</reference>
<reference key="2">
    <citation type="journal article" date="1992" name="Virology">
        <title>Cloning and sequence analysis of the genes encoding the nonstructural proteins of Langat virus and comparative analysis with other flaviviruses.</title>
        <authorList>
            <person name="Iacono-Connors L.C."/>
            <person name="Schmaljohn C.S."/>
        </authorList>
    </citation>
    <scope>NUCLEOTIDE SEQUENCE [GENOMIC RNA] OF 777-3414</scope>
</reference>
<reference key="3">
    <citation type="journal article" date="2005" name="J. Virol.">
        <title>Inhibition of interferon-stimulated JAK-STAT signaling by a tick-borne flavivirus and identification of NS5 as an interferon antagonist.</title>
        <authorList>
            <person name="Best S.M."/>
            <person name="Morris K.L."/>
            <person name="Shannon J.G."/>
            <person name="Robertson S.J."/>
            <person name="Mitzel D.N."/>
            <person name="Park G.S."/>
            <person name="Boer E."/>
            <person name="Wolfinbarger J.B."/>
            <person name="Bloom M.E."/>
        </authorList>
    </citation>
    <scope>FUNCTION (RNA-DIRECTED RNA POLYMERASE NS5)</scope>
</reference>
<reference key="4">
    <citation type="journal article" date="2006" name="Protein Sci.">
        <title>NMR solution structure and backbone dynamics of domain III of the E protein of tick-borne Langat flavivirus suggests a potential site for molecular recognition.</title>
        <authorList>
            <person name="Mukherjee M."/>
            <person name="Dutta K."/>
            <person name="White M.A."/>
            <person name="Cowburn D."/>
            <person name="Fox R.O."/>
        </authorList>
    </citation>
    <scope>STRUCTURE BY NMR OF 580-675</scope>
    <scope>DISULFIDE BOND</scope>
</reference>
<sequence>MAGKAVLKGKGGGPPRRASKVAPKKTRQLRVQMPNGLVLMRMLGVLWHALTGTARSPVLKAFWKVVPLKQATLALRKIKRTVSTLMVGLHRRGSRRTTIDWMTPLLITVMLGMCLTATVRRERDGSMVIRAEGRDAATQVRVENGTCVILATDMGSWCDDSLAYECVTIDQGEEPVDVDCFCRGVEKVTLEYGRCGRREGSRSRRSVLIPSHAQRDLTGRGHQWLEGEAVKAHLTRVEGWVWKNKLFTLSLVMVAWLMVDGLLPRILIVVVALALVPAYASRCTHLENRDFVTGVQGTTRLTLVLELGGCVTVTADGKPSLDVWLDSIYQESPAQTREYCLHAKLTGTKVAARCPTMGPATLPEEHQSGTVCKRDQSDRGWGNHCGLFGKGSIVTCVKFTCEDKKKATGHVYDVNKITYTIKVEPHTGEFVAANETHSGRKSASFTVSSEKTILTLGDYGDVSLLCRVASGVDLAQTVVLALDKTHEHLPTAWQVHRDWFNDLALPWKHDGAEAWNEAGRLVEFGTPHAVKMDVFNLGDQTGVLLKSLAGVPVASIEGTKYHLKSGHVTCEVGLEKLKMKGLTYTVCDKTKFTWKRAPTDSGHDTVVMEVGFSGTRPCRIPVRAVAHGVPEVNVAMLITPNPTMENNGGGFIEMQLPPGDNIIYVGDLNHQWFQKGSSIGRVLQKTRKGIERLTVLGEHAWDFGSVGGVMTSIGRAMHTVLGGAFNTLLGGVGFLPKILLGVAMAWLGLNMRNPTLSMGFLLSGGLVLAMTLGVGADVGCAVDTERMELRCGEGLVVWREVSEWYDNYVFHPETPAVLASAVQRAYEEEICGIVPQNRLEMAMWRSSLVELNLALAEGEANLTVVVDKADPSDYRGGVPGLLNKGKDIKVSWRSWGRSMLWSVPEAPRRFMIGVEGGRECPFARRKTGVMTVAEFGIGLRTKVFMDLRQELTTECDTGVMGAAVKNGMAVHTDQSLWMKSIKNDTTVTIVELIVTDLRNCTWPASHTIDNAGVVNSKLFLPASLAGPRSTYNVIPGYAEQVRGPWAHTPVRIKREECPGTRVTIDKACDKRGASVRSTTESGKVIPEWCCRTCELPPVTYRTGTDCWYAMEIRPVHTQGGLVRSMVVADNGALLSEGGVPGVVALFVVLELVIRRRPATGGTVIWGGIAILALLVTGLVSVESLFRYLVAVGLVFQLELGPEAVAMVLLQAVFEMRTCLLSGFVLRRSITTREIVTVYFLLLVLEMGIPVKGLEHLWRWTDALAMGAIIFRACTAEGKTGIGLLLAAFMTQSDMNIIHDGLTAFLCVATTMAIWRYIRGQGERKGLTWIVPLAGILGGEGSGVRLLAFWELAASRGRRSFNEPMTVIGVMLTLASGMMRHTSQEAVCAMALAAFLLLMLTLGTRKMQLLAEWSGNIEWNPELTSEGGEVSLRVRQDALGNLHLTELEKEERMMAFWLVVGLIASAFHWSGILIVMGLWTISEMLGSPRRTDLVFSGCSEGRSDSRPLDVKNGVYRIYTPGLLWGQRQIGVGYGAKGVLHTMWHVTRGAALLVDGVAVGPYWADVREDVVCYGGAWSLESRWRGETVQVHAFPPGRAHETHQCQPGELILENGRKMGAIPIDLAKGTSGSPIMNSQGEVVGLYGNGLKTNDTYVSSIAQGEVEKSRPNLPQSVVGTGWTAKGQITVLDMHPGSGKTHRVLPELIRQCVERRLRTLVLAPTRVVLREMERALSGKNVRFHSPAVTEQHANGAIVDVMCHATYVNRRLLPQGRQNWEVAIMDEAHWTDPHSIAARGHLYSLAKENRCAFVLMTATPPGKSEPFPESNGAIASEERQIPDGEWRDGFDWITEYEGRTAWFVPSIARGGAIARALRQRGKSVICLNSKTFDKEYSRVKDEKPDFVVTTDISEMGANLDVTRVIDGRTNIKPEEVDGRIELTGTRRVTTASAAQRRGRVGRQGGRTDEYIYSGQCDDDDSGLVQWKEAQILLDNITTARGPVATFYGPEQERMTETAGHYRLPEEKRKHFRHLLAQCDFTPWLAWHVAANVASVTDRSWTWEGPEENAVDENNGELVTFRSPNGAERTLRPVWRDARMFREGRDIREFVSYASGRRSVGDVLMGMSGVPALLRQRCTSAMDVFYTLMHEEPGSRAMRIGERDAPEAFLTAVEMLVLGLATLGVVWCFVVRTSVSRMVLGTLVLATSLIFLWAGGVGYGNMAGVALVFYTLLTVLQPETGKQRSSDDNKLAYFLLTLCGLAGMVAANEMGLLEKTKADLAALFARDQGETVRWGEWTNLDIQPARSWGTYVLVVSLFTPYMLHQLQTRIQQLVNSAVASGAQAMRDLGGGTPFFGVAGHVLALGVASLVGATPTSLILGVGLAAFHLAIVVSGLEAELTQRAHKVFFSAMVRNPMVDGDVINPFGDGEAKPALYERKLSLILALVLCLASVVMNRTFVAVTEAGAVGVAAAMQLLRPEMDVLWTMPVACGMSGVVRGSLWGLLPLGHRLWLRTTGTRRGGSEGDTLGDMWKARLNSCTKEEFFAYRRAGVMETDREKARELLKRGETNMGLAVSRGTSKLAWMEERGYVTLKGEVVDLGCGRGGWSYYAASRPAVMSVRAYTIGGKGHESPRMVTSLGWNLIKFRAGMDVFSMEPHRADAILCDIGESNPDAVVEGERSRRVILLMEQWKNRNPTATCVFKVLAPYRPEVIEALHRFQLQWGGGLVRTPFSRNSTHEMYFSTAITGNIVNSVNIQSRKLLARFGDQRGPTRVPEIDLGVGTRSVVLAEDKVKEKDVMERIQALKDQYCDTWHEDHEHPYRTWQYWGSYKTAATGSSASLLNGVVKLLSWPWNAREDVVRMAMTDTTAFGQQRVFKDKVDTKAQEPQPGTKIIMRAVNDWLLERLVKKSRPRMCSREEFIAKVRSNAALAAWSDEQNKWKSAREAVEDPEFWSLVEAERERHLQGRCAHCVYNMMGKREKKLGEFGVAKGSRAIWYMWLGSRFLEFEALGFLNEDHWASRASSGAGVEGISLNYLGWHLKKLASLSGGLFYADDTAGWDTRITNADLDDEEQILRYMDGDHKKLAATVLRKAYHAKVVRVARPSREGGCVMDIITRRDQRGSGQVVTYALNTITNIKVQLVRMMEGEGVIEVADSHNPRLLRVEKCVEEHGEERLSRMLVSGDDCVVRPVDDRFSKALYFLNDMAKTRKDTGEWEPSTGFASWEEVPFCSHHFHELVMKDGRALVVPCRDQDELVGRARVSPGCGWSVRETACLSKAYGQMWLLSYFHRRDLRTLGFAICSAVPVDWVPTGRTTWSIHASGAWMTTEDMLEVWNRVWIYDNPFMEDKTRVDEWRDTPYLPKSQDILCSSLVGRGERAEWAKNIWGAVEKVRRMIGPEHYRDYLSSMDRHDLHWELKLESSIF</sequence>
<organism>
    <name type="scientific">Langat virus (strain TP21)</name>
    <dbReference type="NCBI Taxonomy" id="31638"/>
    <lineage>
        <taxon>Viruses</taxon>
        <taxon>Riboviria</taxon>
        <taxon>Orthornavirae</taxon>
        <taxon>Kitrinoviricota</taxon>
        <taxon>Flasuviricetes</taxon>
        <taxon>Amarillovirales</taxon>
        <taxon>Flaviviridae</taxon>
        <taxon>Orthoflavivirus</taxon>
        <taxon>Orthoflavivirus langatense</taxon>
    </lineage>
</organism>
<accession>P29837</accession>
<evidence type="ECO:0000250" key="1">
    <source>
        <dbReference type="UniProtKB" id="P03314"/>
    </source>
</evidence>
<evidence type="ECO:0000250" key="2">
    <source>
        <dbReference type="UniProtKB" id="P06935"/>
    </source>
</evidence>
<evidence type="ECO:0000250" key="3">
    <source>
        <dbReference type="UniProtKB" id="P14335"/>
    </source>
</evidence>
<evidence type="ECO:0000250" key="4">
    <source>
        <dbReference type="UniProtKB" id="P14336"/>
    </source>
</evidence>
<evidence type="ECO:0000250" key="5">
    <source>
        <dbReference type="UniProtKB" id="P17763"/>
    </source>
</evidence>
<evidence type="ECO:0000250" key="6">
    <source>
        <dbReference type="UniProtKB" id="Q01299"/>
    </source>
</evidence>
<evidence type="ECO:0000250" key="7">
    <source>
        <dbReference type="UniProtKB" id="Q32ZE1"/>
    </source>
</evidence>
<evidence type="ECO:0000250" key="8">
    <source>
        <dbReference type="UniProtKB" id="Q6YMS4"/>
    </source>
</evidence>
<evidence type="ECO:0000250" key="9">
    <source>
        <dbReference type="UniProtKB" id="Q9Q6P4"/>
    </source>
</evidence>
<evidence type="ECO:0000255" key="10"/>
<evidence type="ECO:0000255" key="11">
    <source>
        <dbReference type="PROSITE-ProRule" id="PRU00498"/>
    </source>
</evidence>
<evidence type="ECO:0000255" key="12">
    <source>
        <dbReference type="PROSITE-ProRule" id="PRU00539"/>
    </source>
</evidence>
<evidence type="ECO:0000255" key="13">
    <source>
        <dbReference type="PROSITE-ProRule" id="PRU00541"/>
    </source>
</evidence>
<evidence type="ECO:0000255" key="14">
    <source>
        <dbReference type="PROSITE-ProRule" id="PRU00542"/>
    </source>
</evidence>
<evidence type="ECO:0000255" key="15">
    <source>
        <dbReference type="PROSITE-ProRule" id="PRU00859"/>
    </source>
</evidence>
<evidence type="ECO:0000255" key="16">
    <source>
        <dbReference type="PROSITE-ProRule" id="PRU00860"/>
    </source>
</evidence>
<evidence type="ECO:0000255" key="17">
    <source>
        <dbReference type="PROSITE-ProRule" id="PRU00924"/>
    </source>
</evidence>
<evidence type="ECO:0000256" key="18">
    <source>
        <dbReference type="SAM" id="MobiDB-lite"/>
    </source>
</evidence>
<evidence type="ECO:0000269" key="19">
    <source>
    </source>
</evidence>
<evidence type="ECO:0000269" key="20">
    <source>
    </source>
</evidence>
<evidence type="ECO:0000305" key="21"/>
<evidence type="ECO:0007829" key="22">
    <source>
        <dbReference type="PDB" id="1Z66"/>
    </source>
</evidence>
<evidence type="ECO:0007829" key="23">
    <source>
        <dbReference type="PDB" id="2GG1"/>
    </source>
</evidence>
<evidence type="ECO:0007829" key="24">
    <source>
        <dbReference type="PDB" id="7WNJ"/>
    </source>
</evidence>
<evidence type="ECO:0007829" key="25">
    <source>
        <dbReference type="PDB" id="9FK0"/>
    </source>
</evidence>
<feature type="chain" id="PRO_0000405129" description="Genome polyprotein">
    <location>
        <begin position="1"/>
        <end position="3414"/>
    </location>
</feature>
<feature type="chain" id="PRO_0000037688" description="Capsid protein C" evidence="1">
    <location>
        <begin position="1"/>
        <end position="96"/>
    </location>
</feature>
<feature type="propeptide" id="PRO_0000405130" description="ER anchor for the capsid protein C, removed in mature form by serine protease NS3" evidence="1">
    <location>
        <begin position="97"/>
        <end position="117"/>
    </location>
</feature>
<feature type="chain" id="PRO_0000405131" description="Protein prM" evidence="2">
    <location>
        <begin position="118"/>
        <end position="280"/>
    </location>
</feature>
<feature type="chain" id="PRO_0000037689" description="Peptide pr" evidence="2">
    <location>
        <begin position="118"/>
        <end position="205"/>
    </location>
</feature>
<feature type="chain" id="PRO_0000037690" description="Small envelope protein M" evidence="2">
    <location>
        <begin position="206"/>
        <end position="280"/>
    </location>
</feature>
<feature type="chain" id="PRO_0000037691" description="Envelope protein E" evidence="2">
    <location>
        <begin position="281"/>
        <end position="776"/>
    </location>
</feature>
<feature type="chain" id="PRO_0000037692" description="Non-structural protein 1" evidence="1">
    <location>
        <begin position="777"/>
        <end position="1128"/>
    </location>
</feature>
<feature type="chain" id="PRO_0000037693" description="Non-structural protein 2A" evidence="2">
    <location>
        <begin position="1129"/>
        <end position="1358"/>
    </location>
</feature>
<feature type="chain" id="PRO_0000037694" description="Serine protease subunit NS2B" evidence="1">
    <location>
        <begin position="1359"/>
        <end position="1489"/>
    </location>
</feature>
<feature type="chain" id="PRO_0000037695" description="Serine protease NS3" evidence="1">
    <location>
        <begin position="1490"/>
        <end position="2110"/>
    </location>
</feature>
<feature type="chain" id="PRO_0000037696" description="Non-structural protein 4A" evidence="1">
    <location>
        <begin position="2111"/>
        <end position="2236"/>
    </location>
</feature>
<feature type="peptide" id="PRO_0000405132" description="Peptide 2k" evidence="1">
    <location>
        <begin position="2237"/>
        <end position="2259"/>
    </location>
</feature>
<feature type="chain" id="PRO_0000037697" description="Non-structural protein 4B" evidence="1">
    <location>
        <begin position="2260"/>
        <end position="2511"/>
    </location>
</feature>
<feature type="chain" id="PRO_0000037698" description="RNA-directed RNA polymerase NS5" evidence="1">
    <location>
        <begin position="2512"/>
        <end position="3414"/>
    </location>
</feature>
<feature type="topological domain" description="Cytoplasmic" evidence="10">
    <location>
        <begin position="1"/>
        <end position="98"/>
    </location>
</feature>
<feature type="transmembrane region" description="Helical" evidence="10">
    <location>
        <begin position="99"/>
        <end position="117"/>
    </location>
</feature>
<feature type="topological domain" description="Extracellular" evidence="10">
    <location>
        <begin position="118"/>
        <end position="242"/>
    </location>
</feature>
<feature type="transmembrane region" description="Helical" evidence="10">
    <location>
        <begin position="243"/>
        <end position="260"/>
    </location>
</feature>
<feature type="topological domain" description="Cytoplasmic" evidence="10">
    <location>
        <position position="261"/>
    </location>
</feature>
<feature type="transmembrane region" description="Helical" evidence="10">
    <location>
        <begin position="262"/>
        <end position="280"/>
    </location>
</feature>
<feature type="topological domain" description="Extracellular" evidence="10">
    <location>
        <begin position="281"/>
        <end position="727"/>
    </location>
</feature>
<feature type="transmembrane region" description="Helical" evidence="10">
    <location>
        <begin position="728"/>
        <end position="748"/>
    </location>
</feature>
<feature type="topological domain" description="Cytoplasmic" evidence="10">
    <location>
        <begin position="749"/>
        <end position="755"/>
    </location>
</feature>
<feature type="transmembrane region" description="Helical" evidence="10">
    <location>
        <begin position="756"/>
        <end position="776"/>
    </location>
</feature>
<feature type="topological domain" description="Extracellular" evidence="10">
    <location>
        <begin position="777"/>
        <end position="1187"/>
    </location>
</feature>
<feature type="transmembrane region" description="Helical" evidence="10">
    <location>
        <begin position="1188"/>
        <end position="1208"/>
    </location>
</feature>
<feature type="topological domain" description="Cytoplasmic" evidence="10">
    <location>
        <begin position="1209"/>
        <end position="1232"/>
    </location>
</feature>
<feature type="transmembrane region" description="Helical" evidence="10">
    <location>
        <begin position="1233"/>
        <end position="1253"/>
    </location>
</feature>
<feature type="topological domain" description="Lumenal" evidence="10">
    <location>
        <begin position="1254"/>
        <end position="1267"/>
    </location>
</feature>
<feature type="transmembrane region" description="Helical" evidence="10">
    <location>
        <begin position="1268"/>
        <end position="1288"/>
    </location>
</feature>
<feature type="topological domain" description="Cytoplasmic" evidence="10">
    <location>
        <begin position="1289"/>
        <end position="1300"/>
    </location>
</feature>
<feature type="transmembrane region" description="Helical" evidence="10">
    <location>
        <begin position="1301"/>
        <end position="1319"/>
    </location>
</feature>
<feature type="topological domain" description="Lumenal" evidence="10">
    <location>
        <begin position="1320"/>
        <end position="1325"/>
    </location>
</feature>
<feature type="transmembrane region" description="Helical" evidence="10">
    <location>
        <begin position="1326"/>
        <end position="1346"/>
    </location>
</feature>
<feature type="topological domain" description="Cytoplasmic" evidence="10">
    <location>
        <begin position="1347"/>
        <end position="1359"/>
    </location>
</feature>
<feature type="transmembrane region" description="Helical" evidence="10">
    <location>
        <begin position="1360"/>
        <end position="1378"/>
    </location>
</feature>
<feature type="topological domain" description="Lumenal" evidence="10">
    <location>
        <begin position="1379"/>
        <end position="1382"/>
    </location>
</feature>
<feature type="transmembrane region" description="Helical" evidence="10">
    <location>
        <begin position="1383"/>
        <end position="1403"/>
    </location>
</feature>
<feature type="topological domain" description="Cytoplasmic" evidence="10">
    <location>
        <begin position="1404"/>
        <end position="1454"/>
    </location>
</feature>
<feature type="intramembrane region" description="Helical" evidence="10">
    <location>
        <begin position="1455"/>
        <end position="1475"/>
    </location>
</feature>
<feature type="topological domain" description="Cytoplasmic" evidence="10">
    <location>
        <begin position="1476"/>
        <end position="2160"/>
    </location>
</feature>
<feature type="transmembrane region" description="Helical" evidence="10">
    <location>
        <begin position="2161"/>
        <end position="2181"/>
    </location>
</feature>
<feature type="topological domain" description="Lumenal" evidence="10">
    <location>
        <begin position="2182"/>
        <end position="2189"/>
    </location>
</feature>
<feature type="intramembrane region" description="Helical" evidence="10">
    <location>
        <begin position="2190"/>
        <end position="2209"/>
    </location>
</feature>
<feature type="topological domain" description="Lumenal" evidence="10">
    <location>
        <position position="2210"/>
    </location>
</feature>
<feature type="transmembrane region" description="Helical" evidence="10">
    <location>
        <begin position="2211"/>
        <end position="2231"/>
    </location>
</feature>
<feature type="topological domain" description="Cytoplasmic" evidence="10">
    <location>
        <begin position="2232"/>
        <end position="2238"/>
    </location>
</feature>
<feature type="transmembrane region" description="Helical; Note=Signal for NS4B" evidence="10">
    <location>
        <begin position="2239"/>
        <end position="2259"/>
    </location>
</feature>
<feature type="topological domain" description="Lumenal" evidence="10">
    <location>
        <begin position="2260"/>
        <end position="2296"/>
    </location>
</feature>
<feature type="intramembrane region" description="Helical" evidence="10">
    <location>
        <begin position="2297"/>
        <end position="2315"/>
    </location>
</feature>
<feature type="topological domain" description="Lumenal" evidence="10">
    <location>
        <begin position="2316"/>
        <end position="2343"/>
    </location>
</feature>
<feature type="intramembrane region" description="Helical" evidence="10">
    <location>
        <begin position="2344"/>
        <end position="2364"/>
    </location>
</feature>
<feature type="topological domain" description="Lumenal" evidence="10">
    <location>
        <begin position="2365"/>
        <end position="2368"/>
    </location>
</feature>
<feature type="transmembrane region" description="Helical" evidence="10">
    <location>
        <begin position="2369"/>
        <end position="2389"/>
    </location>
</feature>
<feature type="topological domain" description="Cytoplasmic" evidence="10">
    <location>
        <begin position="2390"/>
        <end position="2432"/>
    </location>
</feature>
<feature type="transmembrane region" description="Helical" evidence="10">
    <location>
        <begin position="2433"/>
        <end position="2453"/>
    </location>
</feature>
<feature type="topological domain" description="Lumenal" evidence="10">
    <location>
        <begin position="2454"/>
        <end position="2477"/>
    </location>
</feature>
<feature type="transmembrane region" description="Helical" evidence="10">
    <location>
        <begin position="2478"/>
        <end position="2498"/>
    </location>
</feature>
<feature type="topological domain" description="Cytoplasmic" evidence="10">
    <location>
        <begin position="2499"/>
        <end position="3414"/>
    </location>
</feature>
<feature type="domain" description="Peptidase S7" evidence="16">
    <location>
        <begin position="1490"/>
        <end position="1669"/>
    </location>
</feature>
<feature type="domain" description="Helicase ATP-binding" evidence="13">
    <location>
        <begin position="1675"/>
        <end position="1831"/>
    </location>
</feature>
<feature type="domain" description="Helicase C-terminal" evidence="14">
    <location>
        <begin position="1841"/>
        <end position="2000"/>
    </location>
</feature>
<feature type="domain" description="mRNA cap 0-1 NS5-type MT" evidence="17">
    <location>
        <begin position="2512"/>
        <end position="2776"/>
    </location>
</feature>
<feature type="domain" description="RdRp catalytic" evidence="12">
    <location>
        <begin position="3040"/>
        <end position="3189"/>
    </location>
</feature>
<feature type="region of interest" description="Disordered" evidence="18">
    <location>
        <begin position="1"/>
        <end position="27"/>
    </location>
</feature>
<feature type="region of interest" description="Fusion peptide" evidence="4">
    <location>
        <begin position="378"/>
        <end position="391"/>
    </location>
</feature>
<feature type="region of interest" description="Interacts with and activates NS3 protease" evidence="15">
    <location>
        <begin position="1410"/>
        <end position="1449"/>
    </location>
</feature>
<feature type="region of interest" description="Interaction with host SCRIB" evidence="6">
    <location>
        <begin position="2730"/>
        <end position="2734"/>
    </location>
</feature>
<feature type="short sequence motif" description="DEAH box" evidence="13">
    <location>
        <begin position="1779"/>
        <end position="1782"/>
    </location>
</feature>
<feature type="compositionally biased region" description="Basic residues" evidence="18">
    <location>
        <begin position="17"/>
        <end position="27"/>
    </location>
</feature>
<feature type="active site" description="Charge relay system; for serine protease NS3 activity" evidence="16">
    <location>
        <position position="1543"/>
    </location>
</feature>
<feature type="active site" description="Charge relay system; for serine protease NS3 activity" evidence="16">
    <location>
        <position position="1567"/>
    </location>
</feature>
<feature type="active site" description="Charge relay system; for serine protease NS3 activity" evidence="16">
    <location>
        <position position="1627"/>
    </location>
</feature>
<feature type="active site" description="For 2'-O-MTase activity" evidence="8">
    <location>
        <position position="2572"/>
    </location>
</feature>
<feature type="active site" description="For 2'-O-MTase activity" evidence="8">
    <location>
        <position position="2657"/>
    </location>
</feature>
<feature type="active site" description="For 2'-O-MTase activity" evidence="8">
    <location>
        <position position="2694"/>
    </location>
</feature>
<feature type="active site" description="For 2'-O-MTase activity" evidence="8">
    <location>
        <position position="2730"/>
    </location>
</feature>
<feature type="binding site" evidence="13">
    <location>
        <begin position="1688"/>
        <end position="1695"/>
    </location>
    <ligand>
        <name>ATP</name>
        <dbReference type="ChEBI" id="CHEBI:30616"/>
    </ligand>
</feature>
<feature type="binding site" evidence="17">
    <location>
        <position position="2567"/>
    </location>
    <ligand>
        <name>S-adenosyl-L-methionine</name>
        <dbReference type="ChEBI" id="CHEBI:59789"/>
    </ligand>
</feature>
<feature type="binding site" evidence="17">
    <location>
        <position position="2597"/>
    </location>
    <ligand>
        <name>S-adenosyl-L-methionine</name>
        <dbReference type="ChEBI" id="CHEBI:59789"/>
    </ligand>
</feature>
<feature type="binding site" evidence="17">
    <location>
        <position position="2598"/>
    </location>
    <ligand>
        <name>S-adenosyl-L-methionine</name>
        <dbReference type="ChEBI" id="CHEBI:59789"/>
    </ligand>
</feature>
<feature type="binding site" evidence="17">
    <location>
        <position position="2615"/>
    </location>
    <ligand>
        <name>S-adenosyl-L-methionine</name>
        <dbReference type="ChEBI" id="CHEBI:59789"/>
    </ligand>
</feature>
<feature type="binding site" evidence="17">
    <location>
        <position position="2616"/>
    </location>
    <ligand>
        <name>S-adenosyl-L-methionine</name>
        <dbReference type="ChEBI" id="CHEBI:59789"/>
    </ligand>
</feature>
<feature type="binding site" evidence="17">
    <location>
        <position position="2642"/>
    </location>
    <ligand>
        <name>S-adenosyl-L-methionine</name>
        <dbReference type="ChEBI" id="CHEBI:59789"/>
    </ligand>
</feature>
<feature type="binding site" evidence="17">
    <location>
        <position position="2643"/>
    </location>
    <ligand>
        <name>S-adenosyl-L-methionine</name>
        <dbReference type="ChEBI" id="CHEBI:59789"/>
    </ligand>
</feature>
<feature type="binding site" evidence="17">
    <location>
        <position position="2658"/>
    </location>
    <ligand>
        <name>S-adenosyl-L-methionine</name>
        <dbReference type="ChEBI" id="CHEBI:59789"/>
    </ligand>
</feature>
<feature type="binding site" evidence="17">
    <location>
        <position position="2732"/>
    </location>
    <ligand>
        <name>S-adenosyl-L-methionine</name>
        <dbReference type="ChEBI" id="CHEBI:59789"/>
    </ligand>
</feature>
<feature type="binding site" evidence="3">
    <location>
        <position position="2950"/>
    </location>
    <ligand>
        <name>Zn(2+)</name>
        <dbReference type="ChEBI" id="CHEBI:29105"/>
        <label>1</label>
    </ligand>
</feature>
<feature type="binding site" evidence="3">
    <location>
        <position position="2954"/>
    </location>
    <ligand>
        <name>Zn(2+)</name>
        <dbReference type="ChEBI" id="CHEBI:29105"/>
        <label>1</label>
    </ligand>
</feature>
<feature type="binding site" evidence="3">
    <location>
        <position position="2959"/>
    </location>
    <ligand>
        <name>Zn(2+)</name>
        <dbReference type="ChEBI" id="CHEBI:29105"/>
        <label>1</label>
    </ligand>
</feature>
<feature type="binding site" evidence="3">
    <location>
        <position position="2962"/>
    </location>
    <ligand>
        <name>Zn(2+)</name>
        <dbReference type="ChEBI" id="CHEBI:29105"/>
        <label>1</label>
    </ligand>
</feature>
<feature type="binding site" evidence="3">
    <location>
        <position position="3224"/>
    </location>
    <ligand>
        <name>Zn(2+)</name>
        <dbReference type="ChEBI" id="CHEBI:29105"/>
        <label>2</label>
    </ligand>
</feature>
<feature type="binding site" evidence="3">
    <location>
        <position position="3240"/>
    </location>
    <ligand>
        <name>Zn(2+)</name>
        <dbReference type="ChEBI" id="CHEBI:29105"/>
        <label>2</label>
    </ligand>
</feature>
<feature type="binding site" evidence="3">
    <location>
        <position position="3359"/>
    </location>
    <ligand>
        <name>Zn(2+)</name>
        <dbReference type="ChEBI" id="CHEBI:29105"/>
        <label>2</label>
    </ligand>
</feature>
<feature type="site" description="Cleavage; by viral protease NS3" evidence="1">
    <location>
        <begin position="96"/>
        <end position="97"/>
    </location>
</feature>
<feature type="site" description="Cleavage; by host signal peptidase" evidence="1">
    <location>
        <begin position="117"/>
        <end position="118"/>
    </location>
</feature>
<feature type="site" description="Cleavage; by host furin" evidence="2">
    <location>
        <begin position="205"/>
        <end position="206"/>
    </location>
</feature>
<feature type="site" description="Cleavage; by host signal peptidase" evidence="2">
    <location>
        <begin position="280"/>
        <end position="281"/>
    </location>
</feature>
<feature type="site" description="Cleavage; by host signal peptidase" evidence="1">
    <location>
        <begin position="776"/>
        <end position="777"/>
    </location>
</feature>
<feature type="site" description="Cleavage; by host" evidence="2">
    <location>
        <begin position="1128"/>
        <end position="1129"/>
    </location>
</feature>
<feature type="site" description="Cleavage; by viral protease NS3" evidence="2">
    <location>
        <begin position="1358"/>
        <end position="1359"/>
    </location>
</feature>
<feature type="site" description="Cleavage; by autolysis" evidence="1">
    <location>
        <begin position="1489"/>
        <end position="1490"/>
    </location>
</feature>
<feature type="site" description="Involved in NS3 ATPase and RTPase activities" evidence="3">
    <location>
        <position position="1949"/>
    </location>
</feature>
<feature type="site" description="Involved in NS3 ATPase and RTPase activities" evidence="3">
    <location>
        <position position="1952"/>
    </location>
</feature>
<feature type="site" description="Cleavage; by autolysis" evidence="1">
    <location>
        <begin position="2110"/>
        <end position="2111"/>
    </location>
</feature>
<feature type="site" description="Cleavage; by viral protease NS3" evidence="1">
    <location>
        <begin position="2236"/>
        <end position="2237"/>
    </location>
</feature>
<feature type="site" description="Cleavage; by host signal peptidase" evidence="1">
    <location>
        <begin position="2259"/>
        <end position="2260"/>
    </location>
</feature>
<feature type="site" description="Cleavage; by viral protease NS3" evidence="1">
    <location>
        <begin position="2511"/>
        <end position="2512"/>
    </location>
</feature>
<feature type="site" description="mRNA cap binding" evidence="17">
    <location>
        <position position="2524"/>
    </location>
</feature>
<feature type="site" description="mRNA cap binding; via carbonyl oxygen" evidence="17">
    <location>
        <position position="2527"/>
    </location>
</feature>
<feature type="site" description="mRNA cap binding" evidence="17">
    <location>
        <position position="2528"/>
    </location>
</feature>
<feature type="site" description="mRNA cap binding; via carbonyl oxygen" evidence="17">
    <location>
        <position position="2530"/>
    </location>
</feature>
<feature type="site" description="mRNA cap binding" evidence="17">
    <location>
        <position position="2535"/>
    </location>
</feature>
<feature type="site" description="mRNA cap binding" evidence="17">
    <location>
        <position position="2539"/>
    </location>
</feature>
<feature type="site" description="Essential for 2'-O-methyltransferase activity" evidence="17">
    <location>
        <position position="2572"/>
    </location>
</feature>
<feature type="site" description="Essential for 2'-O-methyltransferase and N-7 methyltransferase activity" evidence="17">
    <location>
        <position position="2657"/>
    </location>
</feature>
<feature type="site" description="mRNA cap binding" evidence="17">
    <location>
        <position position="2661"/>
    </location>
</feature>
<feature type="site" description="Essential for 2'-O-methyltransferase activity" evidence="17">
    <location>
        <position position="2694"/>
    </location>
</feature>
<feature type="site" description="mRNA cap binding" evidence="17">
    <location>
        <position position="2725"/>
    </location>
</feature>
<feature type="site" description="mRNA cap binding" evidence="17">
    <location>
        <position position="2727"/>
    </location>
</feature>
<feature type="site" description="Essential for 2'-O-methyltransferase activity" evidence="17">
    <location>
        <position position="2730"/>
    </location>
</feature>
<feature type="modified residue" description="N6-acetyllysine; by host" evidence="7">
    <location>
        <position position="1883"/>
    </location>
</feature>
<feature type="modified residue" description="Phosphoserine" evidence="1">
    <location>
        <position position="2567"/>
    </location>
</feature>
<feature type="glycosylation site" description="N-linked (GlcNAc...) asparagine; by host" evidence="11">
    <location>
        <position position="144"/>
    </location>
</feature>
<feature type="glycosylation site" description="N-linked (GlcNAc...) asparagine; by host" evidence="4 11">
    <location>
        <position position="434"/>
    </location>
</feature>
<feature type="glycosylation site" description="N-linked (GlcNAc...) asparagine; by host" evidence="11">
    <location>
        <position position="861"/>
    </location>
</feature>
<feature type="glycosylation site" description="N-linked (GlcNAc...) asparagine; by host" evidence="11">
    <location>
        <position position="983"/>
    </location>
</feature>
<feature type="glycosylation site" description="N-linked (GlcNAc...) asparagine; by host" evidence="11">
    <location>
        <position position="999"/>
    </location>
</feature>
<feature type="disulfide bond" evidence="4">
    <location>
        <begin position="283"/>
        <end position="310"/>
    </location>
</feature>
<feature type="disulfide bond" evidence="5">
    <location>
        <begin position="340"/>
        <end position="401"/>
    </location>
</feature>
<feature type="disulfide bond" evidence="4">
    <location>
        <begin position="340"/>
        <end position="396"/>
    </location>
</feature>
<feature type="disulfide bond" evidence="4">
    <location>
        <begin position="354"/>
        <end position="385"/>
    </location>
</feature>
<feature type="disulfide bond" evidence="4">
    <location>
        <begin position="372"/>
        <end position="401"/>
    </location>
</feature>
<feature type="disulfide bond" evidence="5">
    <location>
        <begin position="372"/>
        <end position="396"/>
    </location>
</feature>
<feature type="disulfide bond" evidence="4">
    <location>
        <begin position="466"/>
        <end position="570"/>
    </location>
</feature>
<feature type="disulfide bond" evidence="20">
    <location>
        <begin position="587"/>
        <end position="618"/>
    </location>
</feature>
<feature type="disulfide bond" evidence="5">
    <location>
        <begin position="780"/>
        <end position="791"/>
    </location>
</feature>
<feature type="disulfide bond" evidence="5">
    <location>
        <begin position="831"/>
        <end position="920"/>
    </location>
</feature>
<feature type="disulfide bond" evidence="5">
    <location>
        <begin position="955"/>
        <end position="1000"/>
    </location>
</feature>
<feature type="disulfide bond" evidence="5">
    <location>
        <begin position="1057"/>
        <end position="1106"/>
    </location>
</feature>
<feature type="disulfide bond" evidence="5">
    <location>
        <begin position="1068"/>
        <end position="1090"/>
    </location>
</feature>
<feature type="disulfide bond" evidence="5">
    <location>
        <begin position="1089"/>
        <end position="1093"/>
    </location>
</feature>
<feature type="strand" evidence="25">
    <location>
        <begin position="451"/>
        <end position="455"/>
    </location>
</feature>
<feature type="turn" evidence="22">
    <location>
        <begin position="589"/>
        <end position="591"/>
    </location>
</feature>
<feature type="strand" evidence="22">
    <location>
        <begin position="593"/>
        <end position="600"/>
    </location>
</feature>
<feature type="strand" evidence="22">
    <location>
        <begin position="602"/>
        <end position="611"/>
    </location>
</feature>
<feature type="strand" evidence="22">
    <location>
        <begin position="616"/>
        <end position="619"/>
    </location>
</feature>
<feature type="strand" evidence="22">
    <location>
        <begin position="622"/>
        <end position="626"/>
    </location>
</feature>
<feature type="strand" evidence="23">
    <location>
        <begin position="629"/>
        <end position="633"/>
    </location>
</feature>
<feature type="strand" evidence="22">
    <location>
        <begin position="643"/>
        <end position="645"/>
    </location>
</feature>
<feature type="strand" evidence="22">
    <location>
        <begin position="648"/>
        <end position="654"/>
    </location>
</feature>
<feature type="strand" evidence="22">
    <location>
        <begin position="657"/>
        <end position="665"/>
    </location>
</feature>
<feature type="strand" evidence="22">
    <location>
        <begin position="668"/>
        <end position="674"/>
    </location>
</feature>
<feature type="helix" evidence="25">
    <location>
        <begin position="710"/>
        <end position="729"/>
    </location>
</feature>
<feature type="helix" evidence="25">
    <location>
        <begin position="734"/>
        <end position="748"/>
    </location>
</feature>
<feature type="helix" evidence="25">
    <location>
        <begin position="754"/>
        <end position="773"/>
    </location>
</feature>
<feature type="helix" evidence="24">
    <location>
        <begin position="2519"/>
        <end position="2528"/>
    </location>
</feature>
<feature type="helix" evidence="24">
    <location>
        <begin position="2532"/>
        <end position="2539"/>
    </location>
</feature>
<feature type="turn" evidence="24">
    <location>
        <begin position="2540"/>
        <end position="2542"/>
    </location>
</feature>
<feature type="strand" evidence="24">
    <location>
        <begin position="2544"/>
        <end position="2547"/>
    </location>
</feature>
<feature type="helix" evidence="24">
    <location>
        <begin position="2549"/>
        <end position="2557"/>
    </location>
</feature>
<feature type="helix" evidence="24">
    <location>
        <begin position="2569"/>
        <end position="2578"/>
    </location>
</feature>
<feature type="strand" evidence="24">
    <location>
        <begin position="2586"/>
        <end position="2592"/>
    </location>
</feature>
<feature type="helix" evidence="24">
    <location>
        <begin position="2597"/>
        <end position="2604"/>
    </location>
</feature>
<feature type="strand" evidence="24">
    <location>
        <begin position="2608"/>
        <end position="2614"/>
    </location>
</feature>
<feature type="helix" evidence="24">
    <location>
        <begin position="2632"/>
        <end position="2634"/>
    </location>
</feature>
<feature type="strand" evidence="24">
    <location>
        <begin position="2635"/>
        <end position="2638"/>
    </location>
</feature>
<feature type="helix" evidence="24">
    <location>
        <begin position="2643"/>
        <end position="2645"/>
    </location>
</feature>
<feature type="strand" evidence="24">
    <location>
        <begin position="2652"/>
        <end position="2656"/>
    </location>
</feature>
<feature type="helix" evidence="24">
    <location>
        <begin position="2665"/>
        <end position="2685"/>
    </location>
</feature>
<feature type="strand" evidence="24">
    <location>
        <begin position="2690"/>
        <end position="2696"/>
    </location>
</feature>
<feature type="helix" evidence="24">
    <location>
        <begin position="2701"/>
        <end position="2714"/>
    </location>
</feature>
<feature type="strand" evidence="24">
    <location>
        <begin position="2717"/>
        <end position="2719"/>
    </location>
</feature>
<feature type="strand" evidence="24">
    <location>
        <begin position="2731"/>
        <end position="2734"/>
    </location>
</feature>
<feature type="helix" evidence="24">
    <location>
        <begin position="2741"/>
        <end position="2754"/>
    </location>
</feature>
<feature type="turn" evidence="24">
    <location>
        <begin position="2755"/>
        <end position="2757"/>
    </location>
</feature>
<feature type="strand" evidence="24">
    <location>
        <begin position="2763"/>
        <end position="2766"/>
    </location>
</feature>
<dbReference type="EC" id="3.4.21.91"/>
<dbReference type="EC" id="3.6.1.15"/>
<dbReference type="EC" id="3.6.4.13"/>
<dbReference type="EC" id="2.1.1.56" evidence="17"/>
<dbReference type="EC" id="2.1.1.57" evidence="17"/>
<dbReference type="EC" id="2.7.7.48" evidence="12"/>
<dbReference type="EMBL" id="M73835">
    <property type="protein sequence ID" value="AAA02740.1"/>
    <property type="status" value="ALT_TERM"/>
    <property type="molecule type" value="Unassigned_RNA"/>
</dbReference>
<dbReference type="EMBL" id="S35365">
    <property type="protein sequence ID" value="AAB22165.1"/>
    <property type="molecule type" value="Genomic_RNA"/>
</dbReference>
<dbReference type="PIR" id="A42545">
    <property type="entry name" value="A42545"/>
</dbReference>
<dbReference type="PDB" id="1Z66">
    <property type="method" value="NMR"/>
    <property type="chains" value="A=580-675"/>
</dbReference>
<dbReference type="PDB" id="2GG1">
    <property type="method" value="NMR"/>
    <property type="chains" value="A=580-675"/>
</dbReference>
<dbReference type="PDB" id="7WNJ">
    <property type="method" value="X-ray"/>
    <property type="resolution" value="1.70 A"/>
    <property type="chains" value="A=2512-2777"/>
</dbReference>
<dbReference type="PDB" id="8YNJ">
    <property type="method" value="X-ray"/>
    <property type="resolution" value="2.48 A"/>
    <property type="chains" value="A=1666-2110"/>
</dbReference>
<dbReference type="PDB" id="9FK0">
    <property type="method" value="EM"/>
    <property type="resolution" value="3.22 A"/>
    <property type="chains" value="A/B/C=447-455, A/B/C=710-776"/>
</dbReference>
<dbReference type="PDB" id="9H28">
    <property type="method" value="EM"/>
    <property type="resolution" value="3.22 A"/>
    <property type="chains" value="A/B/C=447-455, A/B/C=710-776"/>
</dbReference>
<dbReference type="PDBsum" id="1Z66"/>
<dbReference type="PDBsum" id="2GG1"/>
<dbReference type="PDBsum" id="7WNJ"/>
<dbReference type="PDBsum" id="8YNJ"/>
<dbReference type="PDBsum" id="9FK0"/>
<dbReference type="PDBsum" id="9H28"/>
<dbReference type="BMRB" id="P29837"/>
<dbReference type="EMDB" id="EMD-50518"/>
<dbReference type="EMDB" id="EMD-50624"/>
<dbReference type="SMR" id="P29837"/>
<dbReference type="BRENDA" id="3.4.21.91">
    <property type="organism ID" value="9644"/>
</dbReference>
<dbReference type="EvolutionaryTrace" id="P29837"/>
<dbReference type="Proteomes" id="UP000007766">
    <property type="component" value="Genome"/>
</dbReference>
<dbReference type="GO" id="GO:0005576">
    <property type="term" value="C:extracellular region"/>
    <property type="evidence" value="ECO:0007669"/>
    <property type="project" value="UniProtKB-SubCell"/>
</dbReference>
<dbReference type="GO" id="GO:0044167">
    <property type="term" value="C:host cell endoplasmic reticulum membrane"/>
    <property type="evidence" value="ECO:0007669"/>
    <property type="project" value="UniProtKB-SubCell"/>
</dbReference>
<dbReference type="GO" id="GO:0042025">
    <property type="term" value="C:host cell nucleus"/>
    <property type="evidence" value="ECO:0007669"/>
    <property type="project" value="UniProtKB-SubCell"/>
</dbReference>
<dbReference type="GO" id="GO:0044220">
    <property type="term" value="C:host cell perinuclear region of cytoplasm"/>
    <property type="evidence" value="ECO:0007669"/>
    <property type="project" value="UniProtKB-SubCell"/>
</dbReference>
<dbReference type="GO" id="GO:0016020">
    <property type="term" value="C:membrane"/>
    <property type="evidence" value="ECO:0007669"/>
    <property type="project" value="UniProtKB-KW"/>
</dbReference>
<dbReference type="GO" id="GO:0019028">
    <property type="term" value="C:viral capsid"/>
    <property type="evidence" value="ECO:0007669"/>
    <property type="project" value="UniProtKB-KW"/>
</dbReference>
<dbReference type="GO" id="GO:0019031">
    <property type="term" value="C:viral envelope"/>
    <property type="evidence" value="ECO:0007669"/>
    <property type="project" value="UniProtKB-KW"/>
</dbReference>
<dbReference type="GO" id="GO:0055036">
    <property type="term" value="C:virion membrane"/>
    <property type="evidence" value="ECO:0007669"/>
    <property type="project" value="UniProtKB-SubCell"/>
</dbReference>
<dbReference type="GO" id="GO:0005524">
    <property type="term" value="F:ATP binding"/>
    <property type="evidence" value="ECO:0007669"/>
    <property type="project" value="UniProtKB-KW"/>
</dbReference>
<dbReference type="GO" id="GO:0016887">
    <property type="term" value="F:ATP hydrolysis activity"/>
    <property type="evidence" value="ECO:0007669"/>
    <property type="project" value="RHEA"/>
</dbReference>
<dbReference type="GO" id="GO:0003725">
    <property type="term" value="F:double-stranded RNA binding"/>
    <property type="evidence" value="ECO:0007669"/>
    <property type="project" value="InterPro"/>
</dbReference>
<dbReference type="GO" id="GO:0046872">
    <property type="term" value="F:metal ion binding"/>
    <property type="evidence" value="ECO:0007669"/>
    <property type="project" value="UniProtKB-KW"/>
</dbReference>
<dbReference type="GO" id="GO:0004483">
    <property type="term" value="F:mRNA (nucleoside-2'-O-)-methyltransferase activity"/>
    <property type="evidence" value="ECO:0007669"/>
    <property type="project" value="UniProtKB-EC"/>
</dbReference>
<dbReference type="GO" id="GO:0004482">
    <property type="term" value="F:mRNA 5'-cap (guanine-N7-)-methyltransferase activity"/>
    <property type="evidence" value="ECO:0007669"/>
    <property type="project" value="UniProtKB-EC"/>
</dbReference>
<dbReference type="GO" id="GO:0046983">
    <property type="term" value="F:protein dimerization activity"/>
    <property type="evidence" value="ECO:0007669"/>
    <property type="project" value="InterPro"/>
</dbReference>
<dbReference type="GO" id="GO:0003724">
    <property type="term" value="F:RNA helicase activity"/>
    <property type="evidence" value="ECO:0007669"/>
    <property type="project" value="UniProtKB-EC"/>
</dbReference>
<dbReference type="GO" id="GO:0003968">
    <property type="term" value="F:RNA-directed RNA polymerase activity"/>
    <property type="evidence" value="ECO:0007669"/>
    <property type="project" value="UniProtKB-KW"/>
</dbReference>
<dbReference type="GO" id="GO:0004252">
    <property type="term" value="F:serine-type endopeptidase activity"/>
    <property type="evidence" value="ECO:0007669"/>
    <property type="project" value="InterPro"/>
</dbReference>
<dbReference type="GO" id="GO:0005198">
    <property type="term" value="F:structural molecule activity"/>
    <property type="evidence" value="ECO:0007669"/>
    <property type="project" value="InterPro"/>
</dbReference>
<dbReference type="GO" id="GO:0075512">
    <property type="term" value="P:clathrin-dependent endocytosis of virus by host cell"/>
    <property type="evidence" value="ECO:0007669"/>
    <property type="project" value="UniProtKB-KW"/>
</dbReference>
<dbReference type="GO" id="GO:0039654">
    <property type="term" value="P:fusion of virus membrane with host endosome membrane"/>
    <property type="evidence" value="ECO:0007669"/>
    <property type="project" value="UniProtKB-KW"/>
</dbReference>
<dbReference type="GO" id="GO:0006508">
    <property type="term" value="P:proteolysis"/>
    <property type="evidence" value="ECO:0007669"/>
    <property type="project" value="UniProtKB-KW"/>
</dbReference>
<dbReference type="GO" id="GO:0052151">
    <property type="term" value="P:symbiont-mediated activation of host apoptosis"/>
    <property type="evidence" value="ECO:0007669"/>
    <property type="project" value="UniProtKB-KW"/>
</dbReference>
<dbReference type="GO" id="GO:0039520">
    <property type="term" value="P:symbiont-mediated activation of host autophagy"/>
    <property type="evidence" value="ECO:0007669"/>
    <property type="project" value="UniProtKB-KW"/>
</dbReference>
<dbReference type="GO" id="GO:0039574">
    <property type="term" value="P:symbiont-mediated suppression of host JAK-STAT cascade via inhibition of host TYK2 activity"/>
    <property type="evidence" value="ECO:0007669"/>
    <property type="project" value="UniProtKB-KW"/>
</dbReference>
<dbReference type="GO" id="GO:0039576">
    <property type="term" value="P:symbiont-mediated suppression of host JAK-STAT cascade via inhibition of JAK1 activity"/>
    <property type="evidence" value="ECO:0007669"/>
    <property type="project" value="UniProtKB-KW"/>
</dbReference>
<dbReference type="GO" id="GO:0039563">
    <property type="term" value="P:symbiont-mediated suppression of host JAK-STAT cascade via inhibition of STAT1 activity"/>
    <property type="evidence" value="ECO:0007669"/>
    <property type="project" value="UniProtKB-KW"/>
</dbReference>
<dbReference type="GO" id="GO:0039564">
    <property type="term" value="P:symbiont-mediated suppression of host JAK-STAT cascade via inhibition of STAT2 activity"/>
    <property type="evidence" value="ECO:0007669"/>
    <property type="project" value="UniProtKB-KW"/>
</dbReference>
<dbReference type="GO" id="GO:0039502">
    <property type="term" value="P:symbiont-mediated suppression of host type I interferon-mediated signaling pathway"/>
    <property type="evidence" value="ECO:0007669"/>
    <property type="project" value="UniProtKB-KW"/>
</dbReference>
<dbReference type="GO" id="GO:0039694">
    <property type="term" value="P:viral RNA genome replication"/>
    <property type="evidence" value="ECO:0007669"/>
    <property type="project" value="InterPro"/>
</dbReference>
<dbReference type="GO" id="GO:0019062">
    <property type="term" value="P:virion attachment to host cell"/>
    <property type="evidence" value="ECO:0007669"/>
    <property type="project" value="UniProtKB-KW"/>
</dbReference>
<dbReference type="CDD" id="cd20761">
    <property type="entry name" value="capping_2-OMTase_Flaviviridae"/>
    <property type="match status" value="1"/>
</dbReference>
<dbReference type="CDD" id="cd17931">
    <property type="entry name" value="DEXHc_viral_Ns3"/>
    <property type="match status" value="1"/>
</dbReference>
<dbReference type="CDD" id="cd12149">
    <property type="entry name" value="Flavi_E_C"/>
    <property type="match status" value="1"/>
</dbReference>
<dbReference type="CDD" id="cd17038">
    <property type="entry name" value="Flavi_M"/>
    <property type="match status" value="1"/>
</dbReference>
<dbReference type="CDD" id="cd23204">
    <property type="entry name" value="Flavivirus_RdRp"/>
    <property type="match status" value="1"/>
</dbReference>
<dbReference type="FunFam" id="2.40.10.120:FF:000016">
    <property type="entry name" value="Genome polyprotein"/>
    <property type="match status" value="1"/>
</dbReference>
<dbReference type="FunFam" id="3.30.70.2840:FF:000002">
    <property type="entry name" value="Genome polyprotein"/>
    <property type="match status" value="1"/>
</dbReference>
<dbReference type="FunFam" id="3.30.70.2840:FF:000004">
    <property type="entry name" value="Genome polyprotein"/>
    <property type="match status" value="1"/>
</dbReference>
<dbReference type="Gene3D" id="1.10.260.90">
    <property type="match status" value="1"/>
</dbReference>
<dbReference type="Gene3D" id="1.20.1280.260">
    <property type="match status" value="1"/>
</dbReference>
<dbReference type="Gene3D" id="2.40.10.120">
    <property type="match status" value="1"/>
</dbReference>
<dbReference type="Gene3D" id="2.60.40.350">
    <property type="match status" value="1"/>
</dbReference>
<dbReference type="Gene3D" id="1.10.8.970">
    <property type="entry name" value="Flavivirus envelope glycoprotein M-like"/>
    <property type="match status" value="1"/>
</dbReference>
<dbReference type="Gene3D" id="2.60.260.50">
    <property type="entry name" value="Flavivirus polyprotein propeptide domain"/>
    <property type="match status" value="1"/>
</dbReference>
<dbReference type="Gene3D" id="3.30.70.2840">
    <property type="entry name" value="Flavivirus RNA-directed RNA polymerase, thumb domain"/>
    <property type="match status" value="3"/>
</dbReference>
<dbReference type="Gene3D" id="3.40.50.300">
    <property type="entry name" value="P-loop containing nucleotide triphosphate hydrolases"/>
    <property type="match status" value="2"/>
</dbReference>
<dbReference type="Gene3D" id="2.60.98.10">
    <property type="entry name" value="Tick-borne Encephalitis virus Glycoprotein, domain 1"/>
    <property type="match status" value="1"/>
</dbReference>
<dbReference type="Gene3D" id="3.40.50.150">
    <property type="entry name" value="Vaccinia Virus protein VP39"/>
    <property type="match status" value="1"/>
</dbReference>
<dbReference type="Gene3D" id="3.30.67.10">
    <property type="entry name" value="Viral Envelope Glycoprotein, domain 2"/>
    <property type="match status" value="1"/>
</dbReference>
<dbReference type="Gene3D" id="3.30.387.10">
    <property type="entry name" value="Viral Envelope Glycoprotein, domain 3"/>
    <property type="match status" value="1"/>
</dbReference>
<dbReference type="InterPro" id="IPR043502">
    <property type="entry name" value="DNA/RNA_pol_sf"/>
</dbReference>
<dbReference type="InterPro" id="IPR000069">
    <property type="entry name" value="Env_glycoprot_M_flavivir"/>
</dbReference>
<dbReference type="InterPro" id="IPR038302">
    <property type="entry name" value="Env_glycoprot_M_sf_flavivir"/>
</dbReference>
<dbReference type="InterPro" id="IPR013755">
    <property type="entry name" value="Flav_gly_cen_dom_subdom1"/>
</dbReference>
<dbReference type="InterPro" id="IPR001122">
    <property type="entry name" value="Flavi_capsidC"/>
</dbReference>
<dbReference type="InterPro" id="IPR011492">
    <property type="entry name" value="Flavi_DEAD"/>
</dbReference>
<dbReference type="InterPro" id="IPR027287">
    <property type="entry name" value="Flavi_E_Ig-like"/>
</dbReference>
<dbReference type="InterPro" id="IPR026470">
    <property type="entry name" value="Flavi_E_Stem/Anchor_dom"/>
</dbReference>
<dbReference type="InterPro" id="IPR038345">
    <property type="entry name" value="Flavi_E_Stem/Anchor_dom_sf"/>
</dbReference>
<dbReference type="InterPro" id="IPR011998">
    <property type="entry name" value="Flavi_Glycoprot_E_cen/dimer"/>
</dbReference>
<dbReference type="InterPro" id="IPR001157">
    <property type="entry name" value="Flavi_NS1"/>
</dbReference>
<dbReference type="InterPro" id="IPR000752">
    <property type="entry name" value="Flavi_NS2A"/>
</dbReference>
<dbReference type="InterPro" id="IPR000487">
    <property type="entry name" value="Flavi_NS2B"/>
</dbReference>
<dbReference type="InterPro" id="IPR001850">
    <property type="entry name" value="Flavi_NS3_S7"/>
</dbReference>
<dbReference type="InterPro" id="IPR000404">
    <property type="entry name" value="Flavi_NS4A"/>
</dbReference>
<dbReference type="InterPro" id="IPR001528">
    <property type="entry name" value="Flavi_NS4B"/>
</dbReference>
<dbReference type="InterPro" id="IPR046811">
    <property type="entry name" value="Flavi_NS5_thumb"/>
</dbReference>
<dbReference type="InterPro" id="IPR002535">
    <property type="entry name" value="Flavi_propep"/>
</dbReference>
<dbReference type="InterPro" id="IPR038688">
    <property type="entry name" value="Flavi_propep_sf"/>
</dbReference>
<dbReference type="InterPro" id="IPR047530">
    <property type="entry name" value="Flavi_RdRp"/>
</dbReference>
<dbReference type="InterPro" id="IPR000208">
    <property type="entry name" value="Flavi_RdRp_fingers/palm"/>
</dbReference>
<dbReference type="InterPro" id="IPR000336">
    <property type="entry name" value="Flavivir/Alphavir_Ig-like_sf"/>
</dbReference>
<dbReference type="InterPro" id="IPR014412">
    <property type="entry name" value="Gen_Poly_FLV"/>
</dbReference>
<dbReference type="InterPro" id="IPR036253">
    <property type="entry name" value="Glycoprot_cen/dimer_sf"/>
</dbReference>
<dbReference type="InterPro" id="IPR038055">
    <property type="entry name" value="Glycoprot_E_dimer_dom"/>
</dbReference>
<dbReference type="InterPro" id="IPR013756">
    <property type="entry name" value="GlyE_cen_dom_subdom2"/>
</dbReference>
<dbReference type="InterPro" id="IPR014001">
    <property type="entry name" value="Helicase_ATP-bd"/>
</dbReference>
<dbReference type="InterPro" id="IPR001650">
    <property type="entry name" value="Helicase_C-like"/>
</dbReference>
<dbReference type="InterPro" id="IPR014756">
    <property type="entry name" value="Ig_E-set"/>
</dbReference>
<dbReference type="InterPro" id="IPR026490">
    <property type="entry name" value="mRNA_cap_0/1_MeTrfase"/>
</dbReference>
<dbReference type="InterPro" id="IPR049486">
    <property type="entry name" value="NS3-hel_C_flaviviridae"/>
</dbReference>
<dbReference type="InterPro" id="IPR027417">
    <property type="entry name" value="P-loop_NTPase"/>
</dbReference>
<dbReference type="InterPro" id="IPR009003">
    <property type="entry name" value="Peptidase_S1_PA"/>
</dbReference>
<dbReference type="InterPro" id="IPR007094">
    <property type="entry name" value="RNA-dir_pol_PSvirus"/>
</dbReference>
<dbReference type="InterPro" id="IPR002877">
    <property type="entry name" value="RNA_MeTrfase_FtsJ_dom"/>
</dbReference>
<dbReference type="InterPro" id="IPR029063">
    <property type="entry name" value="SAM-dependent_MTases_sf"/>
</dbReference>
<dbReference type="NCBIfam" id="TIGR04240">
    <property type="entry name" value="flavi_E_stem"/>
    <property type="match status" value="1"/>
</dbReference>
<dbReference type="Pfam" id="PF20907">
    <property type="entry name" value="Flav_NS3-hel_C"/>
    <property type="match status" value="1"/>
</dbReference>
<dbReference type="Pfam" id="PF01003">
    <property type="entry name" value="Flavi_capsid"/>
    <property type="match status" value="1"/>
</dbReference>
<dbReference type="Pfam" id="PF07652">
    <property type="entry name" value="Flavi_DEAD"/>
    <property type="match status" value="1"/>
</dbReference>
<dbReference type="Pfam" id="PF21659">
    <property type="entry name" value="Flavi_E_stem"/>
    <property type="match status" value="1"/>
</dbReference>
<dbReference type="Pfam" id="PF02832">
    <property type="entry name" value="Flavi_glycop_C"/>
    <property type="match status" value="1"/>
</dbReference>
<dbReference type="Pfam" id="PF00869">
    <property type="entry name" value="Flavi_glycoprot"/>
    <property type="match status" value="1"/>
</dbReference>
<dbReference type="Pfam" id="PF01004">
    <property type="entry name" value="Flavi_M"/>
    <property type="match status" value="1"/>
</dbReference>
<dbReference type="Pfam" id="PF00948">
    <property type="entry name" value="Flavi_NS1"/>
    <property type="match status" value="1"/>
</dbReference>
<dbReference type="Pfam" id="PF01005">
    <property type="entry name" value="Flavi_NS2A"/>
    <property type="match status" value="1"/>
</dbReference>
<dbReference type="Pfam" id="PF01350">
    <property type="entry name" value="Flavi_NS4A"/>
    <property type="match status" value="1"/>
</dbReference>
<dbReference type="Pfam" id="PF01349">
    <property type="entry name" value="Flavi_NS4B"/>
    <property type="match status" value="1"/>
</dbReference>
<dbReference type="Pfam" id="PF00972">
    <property type="entry name" value="Flavi_NS5"/>
    <property type="match status" value="1"/>
</dbReference>
<dbReference type="Pfam" id="PF20483">
    <property type="entry name" value="Flavi_NS5_thumb"/>
    <property type="match status" value="1"/>
</dbReference>
<dbReference type="Pfam" id="PF01570">
    <property type="entry name" value="Flavi_propep"/>
    <property type="match status" value="1"/>
</dbReference>
<dbReference type="Pfam" id="PF01728">
    <property type="entry name" value="FtsJ"/>
    <property type="match status" value="1"/>
</dbReference>
<dbReference type="Pfam" id="PF00949">
    <property type="entry name" value="Peptidase_S7"/>
    <property type="match status" value="1"/>
</dbReference>
<dbReference type="PIRSF" id="PIRSF003817">
    <property type="entry name" value="Gen_Poly_FLV"/>
    <property type="match status" value="1"/>
</dbReference>
<dbReference type="SMART" id="SM00487">
    <property type="entry name" value="DEXDc"/>
    <property type="match status" value="1"/>
</dbReference>
<dbReference type="SMART" id="SM00490">
    <property type="entry name" value="HELICc"/>
    <property type="match status" value="1"/>
</dbReference>
<dbReference type="SUPFAM" id="SSF56672">
    <property type="entry name" value="DNA/RNA polymerases"/>
    <property type="match status" value="1"/>
</dbReference>
<dbReference type="SUPFAM" id="SSF81296">
    <property type="entry name" value="E set domains"/>
    <property type="match status" value="1"/>
</dbReference>
<dbReference type="SUPFAM" id="SSF52540">
    <property type="entry name" value="P-loop containing nucleoside triphosphate hydrolases"/>
    <property type="match status" value="2"/>
</dbReference>
<dbReference type="SUPFAM" id="SSF53335">
    <property type="entry name" value="S-adenosyl-L-methionine-dependent methyltransferases"/>
    <property type="match status" value="1"/>
</dbReference>
<dbReference type="SUPFAM" id="SSF50494">
    <property type="entry name" value="Trypsin-like serine proteases"/>
    <property type="match status" value="1"/>
</dbReference>
<dbReference type="SUPFAM" id="SSF56983">
    <property type="entry name" value="Viral glycoprotein, central and dimerisation domains"/>
    <property type="match status" value="1"/>
</dbReference>
<dbReference type="PROSITE" id="PS51527">
    <property type="entry name" value="FLAVIVIRUS_NS2B"/>
    <property type="match status" value="1"/>
</dbReference>
<dbReference type="PROSITE" id="PS51528">
    <property type="entry name" value="FLAVIVIRUS_NS3PRO"/>
    <property type="match status" value="1"/>
</dbReference>
<dbReference type="PROSITE" id="PS51192">
    <property type="entry name" value="HELICASE_ATP_BIND_1"/>
    <property type="match status" value="1"/>
</dbReference>
<dbReference type="PROSITE" id="PS51194">
    <property type="entry name" value="HELICASE_CTER"/>
    <property type="match status" value="1"/>
</dbReference>
<dbReference type="PROSITE" id="PS50507">
    <property type="entry name" value="RDRP_SSRNA_POS"/>
    <property type="match status" value="1"/>
</dbReference>
<dbReference type="PROSITE" id="PS51591">
    <property type="entry name" value="RNA_CAP01_NS5_MT"/>
    <property type="match status" value="1"/>
</dbReference>
<proteinExistence type="evidence at protein level"/>
<keyword id="KW-0002">3D-structure</keyword>
<keyword id="KW-0007">Acetylation</keyword>
<keyword id="KW-1072">Activation of host autophagy by virus</keyword>
<keyword id="KW-1073">Activation of host caspases by virus</keyword>
<keyword id="KW-0067">ATP-binding</keyword>
<keyword id="KW-0167">Capsid protein</keyword>
<keyword id="KW-1165">Clathrin-mediated endocytosis of virus by host</keyword>
<keyword id="KW-0165">Cleavage on pair of basic residues</keyword>
<keyword id="KW-1015">Disulfide bond</keyword>
<keyword id="KW-1170">Fusion of virus membrane with host endosomal membrane</keyword>
<keyword id="KW-1168">Fusion of virus membrane with host membrane</keyword>
<keyword id="KW-0325">Glycoprotein</keyword>
<keyword id="KW-0347">Helicase</keyword>
<keyword id="KW-1035">Host cytoplasm</keyword>
<keyword id="KW-1038">Host endoplasmic reticulum</keyword>
<keyword id="KW-1043">Host membrane</keyword>
<keyword id="KW-1048">Host nucleus</keyword>
<keyword id="KW-0945">Host-virus interaction</keyword>
<keyword id="KW-0378">Hydrolase</keyword>
<keyword id="KW-1090">Inhibition of host innate immune response by virus</keyword>
<keyword id="KW-1114">Inhibition of host interferon signaling pathway by virus</keyword>
<keyword id="KW-1096">Inhibition of host JAK1 by virus</keyword>
<keyword id="KW-1105">Inhibition of host STAT1 by virus</keyword>
<keyword id="KW-1106">Inhibition of host STAT2 by virus</keyword>
<keyword id="KW-1112">Inhibition of host TYK2 by virus</keyword>
<keyword id="KW-0922">Interferon antiviral system evasion</keyword>
<keyword id="KW-0472">Membrane</keyword>
<keyword id="KW-0479">Metal-binding</keyword>
<keyword id="KW-0489">Methyltransferase</keyword>
<keyword id="KW-1119">Modulation of host cell apoptosis by virus</keyword>
<keyword id="KW-0506">mRNA capping</keyword>
<keyword id="KW-0507">mRNA processing</keyword>
<keyword id="KW-0511">Multifunctional enzyme</keyword>
<keyword id="KW-0547">Nucleotide-binding</keyword>
<keyword id="KW-0548">Nucleotidyltransferase</keyword>
<keyword id="KW-0597">Phosphoprotein</keyword>
<keyword id="KW-0645">Protease</keyword>
<keyword id="KW-0694">RNA-binding</keyword>
<keyword id="KW-0696">RNA-directed RNA polymerase</keyword>
<keyword id="KW-0949">S-adenosyl-L-methionine</keyword>
<keyword id="KW-0964">Secreted</keyword>
<keyword id="KW-0720">Serine protease</keyword>
<keyword id="KW-0941">Suppressor of RNA silencing</keyword>
<keyword id="KW-0804">Transcription</keyword>
<keyword id="KW-0805">Transcription regulation</keyword>
<keyword id="KW-0808">Transferase</keyword>
<keyword id="KW-0812">Transmembrane</keyword>
<keyword id="KW-1133">Transmembrane helix</keyword>
<keyword id="KW-1161">Viral attachment to host cell</keyword>
<keyword id="KW-0261">Viral envelope protein</keyword>
<keyword id="KW-0899">Viral immunoevasion</keyword>
<keyword id="KW-1162">Viral penetration into host cytoplasm</keyword>
<keyword id="KW-0693">Viral RNA replication</keyword>
<keyword id="KW-0946">Virion</keyword>
<keyword id="KW-1164">Virus endocytosis by host</keyword>
<keyword id="KW-1160">Virus entry into host cell</keyword>
<keyword id="KW-0862">Zinc</keyword>